<evidence type="ECO:0000255" key="1">
    <source>
        <dbReference type="HAMAP-Rule" id="MF_00022"/>
    </source>
</evidence>
<name>SYE2_WOLSU</name>
<organism>
    <name type="scientific">Wolinella succinogenes (strain ATCC 29543 / DSM 1740 / CCUG 13145 / JCM 31913 / LMG 7466 / NCTC 11488 / FDC 602W)</name>
    <name type="common">Vibrio succinogenes</name>
    <dbReference type="NCBI Taxonomy" id="273121"/>
    <lineage>
        <taxon>Bacteria</taxon>
        <taxon>Pseudomonadati</taxon>
        <taxon>Campylobacterota</taxon>
        <taxon>Epsilonproteobacteria</taxon>
        <taxon>Campylobacterales</taxon>
        <taxon>Helicobacteraceae</taxon>
        <taxon>Wolinella</taxon>
    </lineage>
</organism>
<feature type="chain" id="PRO_0000119700" description="Glutamate--tRNA ligase 2">
    <location>
        <begin position="1"/>
        <end position="438"/>
    </location>
</feature>
<feature type="short sequence motif" description="'HIGH' region" evidence="1">
    <location>
        <begin position="6"/>
        <end position="16"/>
    </location>
</feature>
<feature type="short sequence motif" description="'KMSKS' region" evidence="1">
    <location>
        <begin position="231"/>
        <end position="235"/>
    </location>
</feature>
<feature type="binding site" evidence="1">
    <location>
        <position position="234"/>
    </location>
    <ligand>
        <name>ATP</name>
        <dbReference type="ChEBI" id="CHEBI:30616"/>
    </ligand>
</feature>
<reference key="1">
    <citation type="journal article" date="2003" name="Proc. Natl. Acad. Sci. U.S.A.">
        <title>Complete genome sequence and analysis of Wolinella succinogenes.</title>
        <authorList>
            <person name="Baar C."/>
            <person name="Eppinger M."/>
            <person name="Raddatz G."/>
            <person name="Simon J."/>
            <person name="Lanz C."/>
            <person name="Klimmek O."/>
            <person name="Nandakumar R."/>
            <person name="Gross R."/>
            <person name="Rosinus A."/>
            <person name="Keller H."/>
            <person name="Jagtap P."/>
            <person name="Linke B."/>
            <person name="Meyer F."/>
            <person name="Lederer H."/>
            <person name="Schuster S.C."/>
        </authorList>
    </citation>
    <scope>NUCLEOTIDE SEQUENCE [LARGE SCALE GENOMIC DNA]</scope>
    <source>
        <strain>ATCC 29543 / DSM 1740 / CCUG 13145 / JCM 31913 / LMG 7466 / NCTC 11488 / FDC 602W</strain>
    </source>
</reference>
<sequence length="438" mass="50518">MLRFAPSPTGDMHTGNLRAAIFNYILAKQRGEKFLVRIEDTDMERNIEGKDKEILSLLNLFGMVWDELVYQSHNFPRHAQMAEYLLSQGRAFYCYCSKEFLDQKREEALAQKLPFRYHDAWAEIEKDSTQKPVIRLRGASEEICFKDEIKGIVSFKPHEVDSFVIVREDGIPTYNFACAIDDMLYDVSFIVRGEDHVSNTPKQMLIQRGVGYEKLLQYAHLPILLNEEGKKMSKRDNASSVKWLLEEGYLPQAIANYLILMGNKTPTEVFALKEAIEWFDITHVAKAPAKFDLDKLRFLNREHFKRLSEQDLAFLLDHKDPSVGGLAKLYLQESSTLNELRPKIDALFAPKIAQGEFASAMILLYPHLRAMIEEFSPALKDFEAFKKEAMERSGLKGKPFFKSLRLLLTGSENGPELSDLFEYARFFFNDIIRLKEPS</sequence>
<proteinExistence type="inferred from homology"/>
<keyword id="KW-0030">Aminoacyl-tRNA synthetase</keyword>
<keyword id="KW-0067">ATP-binding</keyword>
<keyword id="KW-0963">Cytoplasm</keyword>
<keyword id="KW-0436">Ligase</keyword>
<keyword id="KW-0547">Nucleotide-binding</keyword>
<keyword id="KW-0648">Protein biosynthesis</keyword>
<keyword id="KW-1185">Reference proteome</keyword>
<accession>Q7MAG3</accession>
<protein>
    <recommendedName>
        <fullName evidence="1">Glutamate--tRNA ligase 2</fullName>
        <ecNumber evidence="1">6.1.1.17</ecNumber>
    </recommendedName>
    <alternativeName>
        <fullName evidence="1">Glutamyl-tRNA synthetase 2</fullName>
        <shortName evidence="1">GluRS 2</shortName>
    </alternativeName>
</protein>
<comment type="function">
    <text evidence="1">Catalyzes the attachment of glutamate to tRNA(Glu) in a two-step reaction: glutamate is first activated by ATP to form Glu-AMP and then transferred to the acceptor end of tRNA(Glu).</text>
</comment>
<comment type="catalytic activity">
    <reaction evidence="1">
        <text>tRNA(Glu) + L-glutamate + ATP = L-glutamyl-tRNA(Glu) + AMP + diphosphate</text>
        <dbReference type="Rhea" id="RHEA:23540"/>
        <dbReference type="Rhea" id="RHEA-COMP:9663"/>
        <dbReference type="Rhea" id="RHEA-COMP:9680"/>
        <dbReference type="ChEBI" id="CHEBI:29985"/>
        <dbReference type="ChEBI" id="CHEBI:30616"/>
        <dbReference type="ChEBI" id="CHEBI:33019"/>
        <dbReference type="ChEBI" id="CHEBI:78442"/>
        <dbReference type="ChEBI" id="CHEBI:78520"/>
        <dbReference type="ChEBI" id="CHEBI:456215"/>
        <dbReference type="EC" id="6.1.1.17"/>
    </reaction>
</comment>
<comment type="subunit">
    <text evidence="1">Monomer.</text>
</comment>
<comment type="subcellular location">
    <subcellularLocation>
        <location evidence="1">Cytoplasm</location>
    </subcellularLocation>
</comment>
<comment type="similarity">
    <text evidence="1">Belongs to the class-I aminoacyl-tRNA synthetase family. Glutamate--tRNA ligase type 1 subfamily.</text>
</comment>
<gene>
    <name evidence="1" type="primary">gltX2</name>
    <name type="ordered locus">WS0274</name>
</gene>
<dbReference type="EC" id="6.1.1.17" evidence="1"/>
<dbReference type="EMBL" id="BX571657">
    <property type="protein sequence ID" value="CAE09427.1"/>
    <property type="molecule type" value="Genomic_DNA"/>
</dbReference>
<dbReference type="RefSeq" id="WP_011138228.1">
    <property type="nucleotide sequence ID" value="NC_005090.1"/>
</dbReference>
<dbReference type="SMR" id="Q7MAG3"/>
<dbReference type="STRING" id="273121.WS0274"/>
<dbReference type="KEGG" id="wsu:WS0274"/>
<dbReference type="eggNOG" id="COG0008">
    <property type="taxonomic scope" value="Bacteria"/>
</dbReference>
<dbReference type="HOGENOM" id="CLU_015768_6_0_7"/>
<dbReference type="Proteomes" id="UP000000422">
    <property type="component" value="Chromosome"/>
</dbReference>
<dbReference type="GO" id="GO:0005829">
    <property type="term" value="C:cytosol"/>
    <property type="evidence" value="ECO:0007669"/>
    <property type="project" value="TreeGrafter"/>
</dbReference>
<dbReference type="GO" id="GO:0005524">
    <property type="term" value="F:ATP binding"/>
    <property type="evidence" value="ECO:0007669"/>
    <property type="project" value="UniProtKB-UniRule"/>
</dbReference>
<dbReference type="GO" id="GO:0004818">
    <property type="term" value="F:glutamate-tRNA ligase activity"/>
    <property type="evidence" value="ECO:0007669"/>
    <property type="project" value="UniProtKB-UniRule"/>
</dbReference>
<dbReference type="GO" id="GO:0000049">
    <property type="term" value="F:tRNA binding"/>
    <property type="evidence" value="ECO:0007669"/>
    <property type="project" value="InterPro"/>
</dbReference>
<dbReference type="GO" id="GO:0006424">
    <property type="term" value="P:glutamyl-tRNA aminoacylation"/>
    <property type="evidence" value="ECO:0007669"/>
    <property type="project" value="UniProtKB-UniRule"/>
</dbReference>
<dbReference type="Gene3D" id="1.10.10.350">
    <property type="match status" value="1"/>
</dbReference>
<dbReference type="Gene3D" id="3.40.50.620">
    <property type="entry name" value="HUPs"/>
    <property type="match status" value="1"/>
</dbReference>
<dbReference type="HAMAP" id="MF_00022">
    <property type="entry name" value="Glu_tRNA_synth_type1"/>
    <property type="match status" value="1"/>
</dbReference>
<dbReference type="InterPro" id="IPR045462">
    <property type="entry name" value="aa-tRNA-synth_I_cd-bd"/>
</dbReference>
<dbReference type="InterPro" id="IPR020751">
    <property type="entry name" value="aa-tRNA-synth_I_codon-bd_sub2"/>
</dbReference>
<dbReference type="InterPro" id="IPR008925">
    <property type="entry name" value="aa_tRNA-synth_I_cd-bd_sf"/>
</dbReference>
<dbReference type="InterPro" id="IPR004527">
    <property type="entry name" value="Glu-tRNA-ligase_bac/mito"/>
</dbReference>
<dbReference type="InterPro" id="IPR000924">
    <property type="entry name" value="Glu/Gln-tRNA-synth"/>
</dbReference>
<dbReference type="InterPro" id="IPR020058">
    <property type="entry name" value="Glu/Gln-tRNA-synth_Ib_cat-dom"/>
</dbReference>
<dbReference type="InterPro" id="IPR049940">
    <property type="entry name" value="GluQ/Sye"/>
</dbReference>
<dbReference type="InterPro" id="IPR014729">
    <property type="entry name" value="Rossmann-like_a/b/a_fold"/>
</dbReference>
<dbReference type="NCBIfam" id="TIGR00464">
    <property type="entry name" value="gltX_bact"/>
    <property type="match status" value="1"/>
</dbReference>
<dbReference type="PANTHER" id="PTHR43311">
    <property type="entry name" value="GLUTAMATE--TRNA LIGASE"/>
    <property type="match status" value="1"/>
</dbReference>
<dbReference type="PANTHER" id="PTHR43311:SF2">
    <property type="entry name" value="GLUTAMATE--TRNA LIGASE, MITOCHONDRIAL-RELATED"/>
    <property type="match status" value="1"/>
</dbReference>
<dbReference type="Pfam" id="PF19269">
    <property type="entry name" value="Anticodon_2"/>
    <property type="match status" value="1"/>
</dbReference>
<dbReference type="Pfam" id="PF00749">
    <property type="entry name" value="tRNA-synt_1c"/>
    <property type="match status" value="1"/>
</dbReference>
<dbReference type="PRINTS" id="PR00987">
    <property type="entry name" value="TRNASYNTHGLU"/>
</dbReference>
<dbReference type="SUPFAM" id="SSF48163">
    <property type="entry name" value="An anticodon-binding domain of class I aminoacyl-tRNA synthetases"/>
    <property type="match status" value="1"/>
</dbReference>
<dbReference type="SUPFAM" id="SSF52374">
    <property type="entry name" value="Nucleotidylyl transferase"/>
    <property type="match status" value="1"/>
</dbReference>